<reference key="1">
    <citation type="journal article" date="2006" name="Proc. Natl. Acad. Sci. U.S.A.">
        <title>Comparative genomics of the lactic acid bacteria.</title>
        <authorList>
            <person name="Makarova K.S."/>
            <person name="Slesarev A."/>
            <person name="Wolf Y.I."/>
            <person name="Sorokin A."/>
            <person name="Mirkin B."/>
            <person name="Koonin E.V."/>
            <person name="Pavlov A."/>
            <person name="Pavlova N."/>
            <person name="Karamychev V."/>
            <person name="Polouchine N."/>
            <person name="Shakhova V."/>
            <person name="Grigoriev I."/>
            <person name="Lou Y."/>
            <person name="Rohksar D."/>
            <person name="Lucas S."/>
            <person name="Huang K."/>
            <person name="Goodstein D.M."/>
            <person name="Hawkins T."/>
            <person name="Plengvidhya V."/>
            <person name="Welker D."/>
            <person name="Hughes J."/>
            <person name="Goh Y."/>
            <person name="Benson A."/>
            <person name="Baldwin K."/>
            <person name="Lee J.-H."/>
            <person name="Diaz-Muniz I."/>
            <person name="Dosti B."/>
            <person name="Smeianov V."/>
            <person name="Wechter W."/>
            <person name="Barabote R."/>
            <person name="Lorca G."/>
            <person name="Altermann E."/>
            <person name="Barrangou R."/>
            <person name="Ganesan B."/>
            <person name="Xie Y."/>
            <person name="Rawsthorne H."/>
            <person name="Tamir D."/>
            <person name="Parker C."/>
            <person name="Breidt F."/>
            <person name="Broadbent J.R."/>
            <person name="Hutkins R."/>
            <person name="O'Sullivan D."/>
            <person name="Steele J."/>
            <person name="Unlu G."/>
            <person name="Saier M.H. Jr."/>
            <person name="Klaenhammer T."/>
            <person name="Richardson P."/>
            <person name="Kozyavkin S."/>
            <person name="Weimer B.C."/>
            <person name="Mills D.A."/>
        </authorList>
    </citation>
    <scope>NUCLEOTIDE SEQUENCE [LARGE SCALE GENOMIC DNA]</scope>
    <source>
        <strain>ATCC 25745 / CCUG 21536 / LMG 10740 / 183-1w</strain>
    </source>
</reference>
<protein>
    <recommendedName>
        <fullName evidence="1">Large ribosomal subunit protein uL18</fullName>
    </recommendedName>
    <alternativeName>
        <fullName evidence="3">50S ribosomal protein L18</fullName>
    </alternativeName>
</protein>
<gene>
    <name evidence="1" type="primary">rplR</name>
    <name type="ordered locus">PEPE_1402</name>
</gene>
<sequence>MISKPDKNKKRQRRHARVRSKISGTAECPRLNVYRSNKNIYAQVIDDVAGVTLVSASTLDSEISGGSKTELASQVGALVAKRAVEKKIENVVFDRGGYIYHGRVQALAEAARENGLKF</sequence>
<accession>Q03ED2</accession>
<name>RL18_PEDPA</name>
<evidence type="ECO:0000255" key="1">
    <source>
        <dbReference type="HAMAP-Rule" id="MF_01337"/>
    </source>
</evidence>
<evidence type="ECO:0000256" key="2">
    <source>
        <dbReference type="SAM" id="MobiDB-lite"/>
    </source>
</evidence>
<evidence type="ECO:0000305" key="3"/>
<feature type="chain" id="PRO_1000053075" description="Large ribosomal subunit protein uL18">
    <location>
        <begin position="1"/>
        <end position="118"/>
    </location>
</feature>
<feature type="region of interest" description="Disordered" evidence="2">
    <location>
        <begin position="1"/>
        <end position="20"/>
    </location>
</feature>
<feature type="compositionally biased region" description="Basic residues" evidence="2">
    <location>
        <begin position="7"/>
        <end position="20"/>
    </location>
</feature>
<proteinExistence type="inferred from homology"/>
<dbReference type="EMBL" id="CP000422">
    <property type="protein sequence ID" value="ABJ68440.1"/>
    <property type="molecule type" value="Genomic_DNA"/>
</dbReference>
<dbReference type="SMR" id="Q03ED2"/>
<dbReference type="STRING" id="278197.PEPE_1402"/>
<dbReference type="KEGG" id="ppe:PEPE_1402"/>
<dbReference type="eggNOG" id="COG0256">
    <property type="taxonomic scope" value="Bacteria"/>
</dbReference>
<dbReference type="HOGENOM" id="CLU_098841_0_1_9"/>
<dbReference type="OrthoDB" id="9810939at2"/>
<dbReference type="Proteomes" id="UP000000773">
    <property type="component" value="Chromosome"/>
</dbReference>
<dbReference type="GO" id="GO:0022625">
    <property type="term" value="C:cytosolic large ribosomal subunit"/>
    <property type="evidence" value="ECO:0007669"/>
    <property type="project" value="TreeGrafter"/>
</dbReference>
<dbReference type="GO" id="GO:0008097">
    <property type="term" value="F:5S rRNA binding"/>
    <property type="evidence" value="ECO:0007669"/>
    <property type="project" value="TreeGrafter"/>
</dbReference>
<dbReference type="GO" id="GO:0003735">
    <property type="term" value="F:structural constituent of ribosome"/>
    <property type="evidence" value="ECO:0007669"/>
    <property type="project" value="InterPro"/>
</dbReference>
<dbReference type="GO" id="GO:0006412">
    <property type="term" value="P:translation"/>
    <property type="evidence" value="ECO:0007669"/>
    <property type="project" value="UniProtKB-UniRule"/>
</dbReference>
<dbReference type="CDD" id="cd00432">
    <property type="entry name" value="Ribosomal_L18_L5e"/>
    <property type="match status" value="1"/>
</dbReference>
<dbReference type="FunFam" id="3.30.420.100:FF:000001">
    <property type="entry name" value="50S ribosomal protein L18"/>
    <property type="match status" value="1"/>
</dbReference>
<dbReference type="Gene3D" id="3.30.420.100">
    <property type="match status" value="1"/>
</dbReference>
<dbReference type="HAMAP" id="MF_01337_B">
    <property type="entry name" value="Ribosomal_uL18_B"/>
    <property type="match status" value="1"/>
</dbReference>
<dbReference type="InterPro" id="IPR004389">
    <property type="entry name" value="Ribosomal_uL18_bac-type"/>
</dbReference>
<dbReference type="InterPro" id="IPR005484">
    <property type="entry name" value="Ribosomal_uL18_bac/euk"/>
</dbReference>
<dbReference type="NCBIfam" id="TIGR00060">
    <property type="entry name" value="L18_bact"/>
    <property type="match status" value="1"/>
</dbReference>
<dbReference type="PANTHER" id="PTHR12899">
    <property type="entry name" value="39S RIBOSOMAL PROTEIN L18, MITOCHONDRIAL"/>
    <property type="match status" value="1"/>
</dbReference>
<dbReference type="PANTHER" id="PTHR12899:SF3">
    <property type="entry name" value="LARGE RIBOSOMAL SUBUNIT PROTEIN UL18M"/>
    <property type="match status" value="1"/>
</dbReference>
<dbReference type="Pfam" id="PF00861">
    <property type="entry name" value="Ribosomal_L18p"/>
    <property type="match status" value="1"/>
</dbReference>
<dbReference type="SUPFAM" id="SSF53137">
    <property type="entry name" value="Translational machinery components"/>
    <property type="match status" value="1"/>
</dbReference>
<organism>
    <name type="scientific">Pediococcus pentosaceus (strain ATCC 25745 / CCUG 21536 / LMG 10740 / 183-1w)</name>
    <dbReference type="NCBI Taxonomy" id="278197"/>
    <lineage>
        <taxon>Bacteria</taxon>
        <taxon>Bacillati</taxon>
        <taxon>Bacillota</taxon>
        <taxon>Bacilli</taxon>
        <taxon>Lactobacillales</taxon>
        <taxon>Lactobacillaceae</taxon>
        <taxon>Pediococcus</taxon>
    </lineage>
</organism>
<comment type="function">
    <text evidence="1">This is one of the proteins that bind and probably mediate the attachment of the 5S RNA into the large ribosomal subunit, where it forms part of the central protuberance.</text>
</comment>
<comment type="subunit">
    <text evidence="1">Part of the 50S ribosomal subunit; part of the 5S rRNA/L5/L18/L25 subcomplex. Contacts the 5S and 23S rRNAs.</text>
</comment>
<comment type="similarity">
    <text evidence="1">Belongs to the universal ribosomal protein uL18 family.</text>
</comment>
<keyword id="KW-0687">Ribonucleoprotein</keyword>
<keyword id="KW-0689">Ribosomal protein</keyword>
<keyword id="KW-0694">RNA-binding</keyword>
<keyword id="KW-0699">rRNA-binding</keyword>